<accession>Q2RXP6</accession>
<proteinExistence type="inferred from homology"/>
<organism>
    <name type="scientific">Rhodospirillum rubrum (strain ATCC 11170 / ATH 1.1.1 / DSM 467 / LMG 4362 / NCIMB 8255 / S1)</name>
    <dbReference type="NCBI Taxonomy" id="269796"/>
    <lineage>
        <taxon>Bacteria</taxon>
        <taxon>Pseudomonadati</taxon>
        <taxon>Pseudomonadota</taxon>
        <taxon>Alphaproteobacteria</taxon>
        <taxon>Rhodospirillales</taxon>
        <taxon>Rhodospirillaceae</taxon>
        <taxon>Rhodospirillum</taxon>
    </lineage>
</organism>
<reference key="1">
    <citation type="journal article" date="2011" name="Stand. Genomic Sci.">
        <title>Complete genome sequence of Rhodospirillum rubrum type strain (S1).</title>
        <authorList>
            <person name="Munk A.C."/>
            <person name="Copeland A."/>
            <person name="Lucas S."/>
            <person name="Lapidus A."/>
            <person name="Del Rio T.G."/>
            <person name="Barry K."/>
            <person name="Detter J.C."/>
            <person name="Hammon N."/>
            <person name="Israni S."/>
            <person name="Pitluck S."/>
            <person name="Brettin T."/>
            <person name="Bruce D."/>
            <person name="Han C."/>
            <person name="Tapia R."/>
            <person name="Gilna P."/>
            <person name="Schmutz J."/>
            <person name="Larimer F."/>
            <person name="Land M."/>
            <person name="Kyrpides N.C."/>
            <person name="Mavromatis K."/>
            <person name="Richardson P."/>
            <person name="Rohde M."/>
            <person name="Goeker M."/>
            <person name="Klenk H.P."/>
            <person name="Zhang Y."/>
            <person name="Roberts G.P."/>
            <person name="Reslewic S."/>
            <person name="Schwartz D.C."/>
        </authorList>
    </citation>
    <scope>NUCLEOTIDE SEQUENCE [LARGE SCALE GENOMIC DNA]</scope>
    <source>
        <strain>ATCC 11170 / ATH 1.1.1 / DSM 467 / LMG 4362 / NCIMB 8255 / S1</strain>
    </source>
</reference>
<feature type="chain" id="PRO_1000058980" description="Cytidylate kinase">
    <location>
        <begin position="1"/>
        <end position="213"/>
    </location>
</feature>
<feature type="binding site" evidence="1">
    <location>
        <begin position="7"/>
        <end position="15"/>
    </location>
    <ligand>
        <name>ATP</name>
        <dbReference type="ChEBI" id="CHEBI:30616"/>
    </ligand>
</feature>
<evidence type="ECO:0000255" key="1">
    <source>
        <dbReference type="HAMAP-Rule" id="MF_00238"/>
    </source>
</evidence>
<keyword id="KW-0067">ATP-binding</keyword>
<keyword id="KW-0963">Cytoplasm</keyword>
<keyword id="KW-0418">Kinase</keyword>
<keyword id="KW-0547">Nucleotide-binding</keyword>
<keyword id="KW-1185">Reference proteome</keyword>
<keyword id="KW-0808">Transferase</keyword>
<name>KCY_RHORT</name>
<comment type="catalytic activity">
    <reaction evidence="1">
        <text>CMP + ATP = CDP + ADP</text>
        <dbReference type="Rhea" id="RHEA:11600"/>
        <dbReference type="ChEBI" id="CHEBI:30616"/>
        <dbReference type="ChEBI" id="CHEBI:58069"/>
        <dbReference type="ChEBI" id="CHEBI:60377"/>
        <dbReference type="ChEBI" id="CHEBI:456216"/>
        <dbReference type="EC" id="2.7.4.25"/>
    </reaction>
</comment>
<comment type="catalytic activity">
    <reaction evidence="1">
        <text>dCMP + ATP = dCDP + ADP</text>
        <dbReference type="Rhea" id="RHEA:25094"/>
        <dbReference type="ChEBI" id="CHEBI:30616"/>
        <dbReference type="ChEBI" id="CHEBI:57566"/>
        <dbReference type="ChEBI" id="CHEBI:58593"/>
        <dbReference type="ChEBI" id="CHEBI:456216"/>
        <dbReference type="EC" id="2.7.4.25"/>
    </reaction>
</comment>
<comment type="subcellular location">
    <subcellularLocation>
        <location evidence="1">Cytoplasm</location>
    </subcellularLocation>
</comment>
<comment type="similarity">
    <text evidence="1">Belongs to the cytidylate kinase family. Type 1 subfamily.</text>
</comment>
<dbReference type="EC" id="2.7.4.25" evidence="1"/>
<dbReference type="EMBL" id="CP000230">
    <property type="protein sequence ID" value="ABC21099.1"/>
    <property type="molecule type" value="Genomic_DNA"/>
</dbReference>
<dbReference type="RefSeq" id="WP_011388047.1">
    <property type="nucleotide sequence ID" value="NC_007643.1"/>
</dbReference>
<dbReference type="RefSeq" id="YP_425386.1">
    <property type="nucleotide sequence ID" value="NC_007643.1"/>
</dbReference>
<dbReference type="SMR" id="Q2RXP6"/>
<dbReference type="STRING" id="269796.Rru_A0294"/>
<dbReference type="EnsemblBacteria" id="ABC21099">
    <property type="protein sequence ID" value="ABC21099"/>
    <property type="gene ID" value="Rru_A0294"/>
</dbReference>
<dbReference type="KEGG" id="rru:Rru_A0294"/>
<dbReference type="PATRIC" id="fig|269796.9.peg.349"/>
<dbReference type="eggNOG" id="COG0283">
    <property type="taxonomic scope" value="Bacteria"/>
</dbReference>
<dbReference type="HOGENOM" id="CLU_079959_0_1_5"/>
<dbReference type="PhylomeDB" id="Q2RXP6"/>
<dbReference type="Proteomes" id="UP000001929">
    <property type="component" value="Chromosome"/>
</dbReference>
<dbReference type="GO" id="GO:0005737">
    <property type="term" value="C:cytoplasm"/>
    <property type="evidence" value="ECO:0007669"/>
    <property type="project" value="UniProtKB-SubCell"/>
</dbReference>
<dbReference type="GO" id="GO:0005524">
    <property type="term" value="F:ATP binding"/>
    <property type="evidence" value="ECO:0007669"/>
    <property type="project" value="UniProtKB-UniRule"/>
</dbReference>
<dbReference type="GO" id="GO:0036430">
    <property type="term" value="F:CMP kinase activity"/>
    <property type="evidence" value="ECO:0007669"/>
    <property type="project" value="RHEA"/>
</dbReference>
<dbReference type="GO" id="GO:0036431">
    <property type="term" value="F:dCMP kinase activity"/>
    <property type="evidence" value="ECO:0007669"/>
    <property type="project" value="RHEA"/>
</dbReference>
<dbReference type="GO" id="GO:0006220">
    <property type="term" value="P:pyrimidine nucleotide metabolic process"/>
    <property type="evidence" value="ECO:0007669"/>
    <property type="project" value="UniProtKB-UniRule"/>
</dbReference>
<dbReference type="CDD" id="cd02020">
    <property type="entry name" value="CMPK"/>
    <property type="match status" value="1"/>
</dbReference>
<dbReference type="Gene3D" id="3.40.50.300">
    <property type="entry name" value="P-loop containing nucleotide triphosphate hydrolases"/>
    <property type="match status" value="1"/>
</dbReference>
<dbReference type="HAMAP" id="MF_00238">
    <property type="entry name" value="Cytidyl_kinase_type1"/>
    <property type="match status" value="1"/>
</dbReference>
<dbReference type="InterPro" id="IPR003136">
    <property type="entry name" value="Cytidylate_kin"/>
</dbReference>
<dbReference type="InterPro" id="IPR011994">
    <property type="entry name" value="Cytidylate_kinase_dom"/>
</dbReference>
<dbReference type="InterPro" id="IPR027417">
    <property type="entry name" value="P-loop_NTPase"/>
</dbReference>
<dbReference type="NCBIfam" id="TIGR00017">
    <property type="entry name" value="cmk"/>
    <property type="match status" value="1"/>
</dbReference>
<dbReference type="Pfam" id="PF02224">
    <property type="entry name" value="Cytidylate_kin"/>
    <property type="match status" value="1"/>
</dbReference>
<dbReference type="SUPFAM" id="SSF52540">
    <property type="entry name" value="P-loop containing nucleoside triphosphate hydrolases"/>
    <property type="match status" value="1"/>
</dbReference>
<gene>
    <name evidence="1" type="primary">cmk</name>
    <name type="ordered locus">Rru_A0294</name>
</gene>
<protein>
    <recommendedName>
        <fullName evidence="1">Cytidylate kinase</fullName>
        <shortName evidence="1">CK</shortName>
        <ecNumber evidence="1">2.7.4.25</ecNumber>
    </recommendedName>
    <alternativeName>
        <fullName evidence="1">Cytidine monophosphate kinase</fullName>
        <shortName evidence="1">CMP kinase</shortName>
    </alternativeName>
</protein>
<sequence>MIIAIDGPAASGKGTLARRLATQLRFAYLDTGKLYRAVGMAVIKGGADPHDAKAALAAARALDPATLGDRLLSTDTAGKAASVVGAIPEVRAALLDLQRDFATHPPQGAPGAVLDGRDIGTVVCPEAEVKIFVTASVEVRAHRRLQELRSGGHDVKEDDVLRDMRERDARDSGRAVAPMAIAADAVVLDTSRMTAEQALTAALDILAHKSQKT</sequence>